<evidence type="ECO:0000255" key="1">
    <source>
        <dbReference type="HAMAP-Rule" id="MF_00170"/>
    </source>
</evidence>
<reference key="1">
    <citation type="submission" date="2007-03" db="EMBL/GenBank/DDBJ databases">
        <title>Complete sequence of chromosome 1 of Burkholderia vietnamiensis G4.</title>
        <authorList>
            <consortium name="US DOE Joint Genome Institute"/>
            <person name="Copeland A."/>
            <person name="Lucas S."/>
            <person name="Lapidus A."/>
            <person name="Barry K."/>
            <person name="Detter J.C."/>
            <person name="Glavina del Rio T."/>
            <person name="Hammon N."/>
            <person name="Israni S."/>
            <person name="Dalin E."/>
            <person name="Tice H."/>
            <person name="Pitluck S."/>
            <person name="Chain P."/>
            <person name="Malfatti S."/>
            <person name="Shin M."/>
            <person name="Vergez L."/>
            <person name="Schmutz J."/>
            <person name="Larimer F."/>
            <person name="Land M."/>
            <person name="Hauser L."/>
            <person name="Kyrpides N."/>
            <person name="Tiedje J."/>
            <person name="Richardson P."/>
        </authorList>
    </citation>
    <scope>NUCLEOTIDE SEQUENCE [LARGE SCALE GENOMIC DNA]</scope>
    <source>
        <strain>G4 / LMG 22486</strain>
    </source>
</reference>
<dbReference type="EC" id="5.3.1.6" evidence="1"/>
<dbReference type="EMBL" id="CP000614">
    <property type="protein sequence ID" value="ABO54520.1"/>
    <property type="molecule type" value="Genomic_DNA"/>
</dbReference>
<dbReference type="SMR" id="A4JE17"/>
<dbReference type="KEGG" id="bvi:Bcep1808_1513"/>
<dbReference type="eggNOG" id="COG0120">
    <property type="taxonomic scope" value="Bacteria"/>
</dbReference>
<dbReference type="HOGENOM" id="CLU_056590_1_1_4"/>
<dbReference type="UniPathway" id="UPA00115">
    <property type="reaction ID" value="UER00412"/>
</dbReference>
<dbReference type="Proteomes" id="UP000002287">
    <property type="component" value="Chromosome 1"/>
</dbReference>
<dbReference type="GO" id="GO:0005829">
    <property type="term" value="C:cytosol"/>
    <property type="evidence" value="ECO:0007669"/>
    <property type="project" value="TreeGrafter"/>
</dbReference>
<dbReference type="GO" id="GO:0004751">
    <property type="term" value="F:ribose-5-phosphate isomerase activity"/>
    <property type="evidence" value="ECO:0007669"/>
    <property type="project" value="UniProtKB-UniRule"/>
</dbReference>
<dbReference type="GO" id="GO:0006014">
    <property type="term" value="P:D-ribose metabolic process"/>
    <property type="evidence" value="ECO:0007669"/>
    <property type="project" value="TreeGrafter"/>
</dbReference>
<dbReference type="GO" id="GO:0009052">
    <property type="term" value="P:pentose-phosphate shunt, non-oxidative branch"/>
    <property type="evidence" value="ECO:0007669"/>
    <property type="project" value="UniProtKB-UniRule"/>
</dbReference>
<dbReference type="CDD" id="cd01398">
    <property type="entry name" value="RPI_A"/>
    <property type="match status" value="1"/>
</dbReference>
<dbReference type="FunFam" id="3.40.50.1360:FF:000001">
    <property type="entry name" value="Ribose-5-phosphate isomerase A"/>
    <property type="match status" value="1"/>
</dbReference>
<dbReference type="Gene3D" id="3.30.70.260">
    <property type="match status" value="1"/>
</dbReference>
<dbReference type="Gene3D" id="3.40.50.1360">
    <property type="match status" value="1"/>
</dbReference>
<dbReference type="HAMAP" id="MF_00170">
    <property type="entry name" value="Rib_5P_isom_A"/>
    <property type="match status" value="1"/>
</dbReference>
<dbReference type="InterPro" id="IPR037171">
    <property type="entry name" value="NagB/RpiA_transferase-like"/>
</dbReference>
<dbReference type="InterPro" id="IPR020672">
    <property type="entry name" value="Ribose5P_isomerase_typA_subgr"/>
</dbReference>
<dbReference type="InterPro" id="IPR004788">
    <property type="entry name" value="Ribose5P_isomerase_type_A"/>
</dbReference>
<dbReference type="NCBIfam" id="NF001924">
    <property type="entry name" value="PRK00702.1"/>
    <property type="match status" value="1"/>
</dbReference>
<dbReference type="NCBIfam" id="TIGR00021">
    <property type="entry name" value="rpiA"/>
    <property type="match status" value="1"/>
</dbReference>
<dbReference type="PANTHER" id="PTHR11934">
    <property type="entry name" value="RIBOSE-5-PHOSPHATE ISOMERASE"/>
    <property type="match status" value="1"/>
</dbReference>
<dbReference type="PANTHER" id="PTHR11934:SF0">
    <property type="entry name" value="RIBOSE-5-PHOSPHATE ISOMERASE"/>
    <property type="match status" value="1"/>
</dbReference>
<dbReference type="Pfam" id="PF06026">
    <property type="entry name" value="Rib_5-P_isom_A"/>
    <property type="match status" value="1"/>
</dbReference>
<dbReference type="SUPFAM" id="SSF75445">
    <property type="entry name" value="D-ribose-5-phosphate isomerase (RpiA), lid domain"/>
    <property type="match status" value="1"/>
</dbReference>
<dbReference type="SUPFAM" id="SSF100950">
    <property type="entry name" value="NagB/RpiA/CoA transferase-like"/>
    <property type="match status" value="1"/>
</dbReference>
<name>RPIA_BURVG</name>
<feature type="chain" id="PRO_1000016916" description="Ribose-5-phosphate isomerase A">
    <location>
        <begin position="1"/>
        <end position="230"/>
    </location>
</feature>
<feature type="active site" description="Proton acceptor" evidence="1">
    <location>
        <position position="107"/>
    </location>
</feature>
<feature type="binding site" evidence="1">
    <location>
        <begin position="32"/>
        <end position="35"/>
    </location>
    <ligand>
        <name>substrate</name>
    </ligand>
</feature>
<feature type="binding site" evidence="1">
    <location>
        <begin position="85"/>
        <end position="88"/>
    </location>
    <ligand>
        <name>substrate</name>
    </ligand>
</feature>
<feature type="binding site" evidence="1">
    <location>
        <begin position="98"/>
        <end position="101"/>
    </location>
    <ligand>
        <name>substrate</name>
    </ligand>
</feature>
<feature type="binding site" evidence="1">
    <location>
        <position position="125"/>
    </location>
    <ligand>
        <name>substrate</name>
    </ligand>
</feature>
<protein>
    <recommendedName>
        <fullName evidence="1">Ribose-5-phosphate isomerase A</fullName>
        <ecNumber evidence="1">5.3.1.6</ecNumber>
    </recommendedName>
    <alternativeName>
        <fullName evidence="1">Phosphoriboisomerase A</fullName>
        <shortName evidence="1">PRI</shortName>
    </alternativeName>
</protein>
<keyword id="KW-0413">Isomerase</keyword>
<proteinExistence type="inferred from homology"/>
<comment type="function">
    <text evidence="1">Catalyzes the reversible conversion of ribose-5-phosphate to ribulose 5-phosphate.</text>
</comment>
<comment type="catalytic activity">
    <reaction evidence="1">
        <text>aldehydo-D-ribose 5-phosphate = D-ribulose 5-phosphate</text>
        <dbReference type="Rhea" id="RHEA:14657"/>
        <dbReference type="ChEBI" id="CHEBI:58121"/>
        <dbReference type="ChEBI" id="CHEBI:58273"/>
        <dbReference type="EC" id="5.3.1.6"/>
    </reaction>
</comment>
<comment type="pathway">
    <text evidence="1">Carbohydrate degradation; pentose phosphate pathway; D-ribose 5-phosphate from D-ribulose 5-phosphate (non-oxidative stage): step 1/1.</text>
</comment>
<comment type="subunit">
    <text evidence="1">Homodimer.</text>
</comment>
<comment type="similarity">
    <text evidence="1">Belongs to the ribose 5-phosphate isomerase family.</text>
</comment>
<gene>
    <name evidence="1" type="primary">rpiA</name>
    <name type="ordered locus">Bcep1808_1513</name>
</gene>
<organism>
    <name type="scientific">Burkholderia vietnamiensis (strain G4 / LMG 22486)</name>
    <name type="common">Burkholderia cepacia (strain R1808)</name>
    <dbReference type="NCBI Taxonomy" id="269482"/>
    <lineage>
        <taxon>Bacteria</taxon>
        <taxon>Pseudomonadati</taxon>
        <taxon>Pseudomonadota</taxon>
        <taxon>Betaproteobacteria</taxon>
        <taxon>Burkholderiales</taxon>
        <taxon>Burkholderiaceae</taxon>
        <taxon>Burkholderia</taxon>
        <taxon>Burkholderia cepacia complex</taxon>
    </lineage>
</organism>
<sequence length="230" mass="23893">MTQDELKRLVGQAAADYVIQNVPEGAVIGVGTGSTANCFIDALAAVKSRYRGAVSSSVATTERLKSHGIKVFDLNEIDALQVYVDGADEIDASGAMIKGGGGALTREKIVASVADTFVCIADGSKRVPVLGAFPLPIEVVPMARTAIGRRVAALGGVPVLRVTKDGAPYITDNGNEIIDVKGLQIAEPRAFEAKVNAWPGVVTVGLFAERGANLCLLGTENGVETIIYPA</sequence>
<accession>A4JE17</accession>